<gene>
    <name type="primary">bfr</name>
    <name type="synonym">bfrA</name>
    <name type="ordered locus">BQ2027_MB1907</name>
</gene>
<comment type="function">
    <text evidence="1">Iron-storage protein, whose ferroxidase center binds Fe(2+), oxidizes it using dioxygen to Fe(3+), and participates in the subsequent Fe(3+) oxide mineral core formation within the central cavity of the BFR protein shell.</text>
</comment>
<comment type="catalytic activity">
    <reaction>
        <text>4 Fe(2+) + O2 + 4 H(+) = 4 Fe(3+) + 2 H2O</text>
        <dbReference type="Rhea" id="RHEA:11148"/>
        <dbReference type="ChEBI" id="CHEBI:15377"/>
        <dbReference type="ChEBI" id="CHEBI:15378"/>
        <dbReference type="ChEBI" id="CHEBI:15379"/>
        <dbReference type="ChEBI" id="CHEBI:29033"/>
        <dbReference type="ChEBI" id="CHEBI:29034"/>
        <dbReference type="EC" id="1.16.3.1"/>
    </reaction>
</comment>
<comment type="catalytic activity">
    <reaction evidence="2">
        <text>Fe(2+)(in) = Fe(2+)(out)</text>
        <dbReference type="Rhea" id="RHEA:28486"/>
        <dbReference type="ChEBI" id="CHEBI:29033"/>
    </reaction>
</comment>
<comment type="cofactor">
    <cofactor evidence="1">
        <name>heme b</name>
        <dbReference type="ChEBI" id="CHEBI:60344"/>
    </cofactor>
    <text evidence="1">Binds 1 heme b (iron(II)-protoporphyrin IX) group per dimer.</text>
</comment>
<comment type="subunit">
    <text evidence="1">Homooligomer of 24 subunits, arranged as 12 dimers, that are packed together to form an approximately spherical molecule with a central cavity, in which large amounts of iron can be deposited.</text>
</comment>
<comment type="similarity">
    <text evidence="4">Belongs to the bacterioferritin family.</text>
</comment>
<protein>
    <recommendedName>
        <fullName>Bacterioferritin</fullName>
        <shortName>BFR</shortName>
        <ecNumber>1.16.3.1</ecNumber>
    </recommendedName>
</protein>
<accession>P63698</accession>
<accession>A0A1R3XZK1</accession>
<accession>O08465</accession>
<accession>X2BJ97</accession>
<keyword id="KW-0349">Heme</keyword>
<keyword id="KW-0408">Iron</keyword>
<keyword id="KW-0409">Iron storage</keyword>
<keyword id="KW-0479">Metal-binding</keyword>
<keyword id="KW-0560">Oxidoreductase</keyword>
<keyword id="KW-1185">Reference proteome</keyword>
<organism>
    <name type="scientific">Mycobacterium bovis (strain ATCC BAA-935 / AF2122/97)</name>
    <dbReference type="NCBI Taxonomy" id="233413"/>
    <lineage>
        <taxon>Bacteria</taxon>
        <taxon>Bacillati</taxon>
        <taxon>Actinomycetota</taxon>
        <taxon>Actinomycetes</taxon>
        <taxon>Mycobacteriales</taxon>
        <taxon>Mycobacteriaceae</taxon>
        <taxon>Mycobacterium</taxon>
        <taxon>Mycobacterium tuberculosis complex</taxon>
    </lineage>
</organism>
<feature type="chain" id="PRO_0000192601" description="Bacterioferritin">
    <location>
        <begin position="1"/>
        <end position="159"/>
    </location>
</feature>
<feature type="domain" description="Ferritin-like diiron" evidence="3">
    <location>
        <begin position="1"/>
        <end position="145"/>
    </location>
</feature>
<feature type="binding site" evidence="3">
    <location>
        <position position="18"/>
    </location>
    <ligand>
        <name>Fe cation</name>
        <dbReference type="ChEBI" id="CHEBI:24875"/>
        <label>1</label>
    </ligand>
</feature>
<feature type="binding site" evidence="3">
    <location>
        <position position="51"/>
    </location>
    <ligand>
        <name>Fe cation</name>
        <dbReference type="ChEBI" id="CHEBI:24875"/>
        <label>1</label>
    </ligand>
</feature>
<feature type="binding site" evidence="3">
    <location>
        <position position="51"/>
    </location>
    <ligand>
        <name>Fe cation</name>
        <dbReference type="ChEBI" id="CHEBI:24875"/>
        <label>2</label>
    </ligand>
</feature>
<feature type="binding site" description="axial binding residue" evidence="3">
    <location>
        <position position="52"/>
    </location>
    <ligand>
        <name>heme b</name>
        <dbReference type="ChEBI" id="CHEBI:60344"/>
        <note>ligand shared between dimeric partners</note>
    </ligand>
    <ligandPart>
        <name>Fe</name>
        <dbReference type="ChEBI" id="CHEBI:18248"/>
    </ligandPart>
</feature>
<feature type="binding site" evidence="3">
    <location>
        <position position="54"/>
    </location>
    <ligand>
        <name>Fe cation</name>
        <dbReference type="ChEBI" id="CHEBI:24875"/>
        <label>1</label>
    </ligand>
</feature>
<feature type="binding site" evidence="3">
    <location>
        <position position="94"/>
    </location>
    <ligand>
        <name>Fe cation</name>
        <dbReference type="ChEBI" id="CHEBI:24875"/>
        <label>2</label>
    </ligand>
</feature>
<feature type="binding site" evidence="3">
    <location>
        <position position="127"/>
    </location>
    <ligand>
        <name>Fe cation</name>
        <dbReference type="ChEBI" id="CHEBI:24875"/>
        <label>1</label>
    </ligand>
</feature>
<feature type="binding site" evidence="3">
    <location>
        <position position="127"/>
    </location>
    <ligand>
        <name>Fe cation</name>
        <dbReference type="ChEBI" id="CHEBI:24875"/>
        <label>2</label>
    </ligand>
</feature>
<feature type="binding site" evidence="3">
    <location>
        <position position="130"/>
    </location>
    <ligand>
        <name>Fe cation</name>
        <dbReference type="ChEBI" id="CHEBI:24875"/>
        <label>2</label>
    </ligand>
</feature>
<dbReference type="EC" id="1.16.3.1"/>
<dbReference type="EMBL" id="LT708304">
    <property type="protein sequence ID" value="SIU00511.1"/>
    <property type="molecule type" value="Genomic_DNA"/>
</dbReference>
<dbReference type="RefSeq" id="NP_855559.1">
    <property type="nucleotide sequence ID" value="NC_002945.3"/>
</dbReference>
<dbReference type="RefSeq" id="WP_003409398.1">
    <property type="nucleotide sequence ID" value="NC_002945.4"/>
</dbReference>
<dbReference type="SMR" id="P63698"/>
<dbReference type="GeneID" id="45425849"/>
<dbReference type="KEGG" id="mbo:BQ2027_MB1907"/>
<dbReference type="PATRIC" id="fig|233413.5.peg.2091"/>
<dbReference type="Proteomes" id="UP000001419">
    <property type="component" value="Chromosome"/>
</dbReference>
<dbReference type="GO" id="GO:0005829">
    <property type="term" value="C:cytosol"/>
    <property type="evidence" value="ECO:0007669"/>
    <property type="project" value="TreeGrafter"/>
</dbReference>
<dbReference type="GO" id="GO:0008199">
    <property type="term" value="F:ferric iron binding"/>
    <property type="evidence" value="ECO:0007669"/>
    <property type="project" value="InterPro"/>
</dbReference>
<dbReference type="GO" id="GO:0004322">
    <property type="term" value="F:ferroxidase activity"/>
    <property type="evidence" value="ECO:0007669"/>
    <property type="project" value="UniProtKB-EC"/>
</dbReference>
<dbReference type="GO" id="GO:0020037">
    <property type="term" value="F:heme binding"/>
    <property type="evidence" value="ECO:0007669"/>
    <property type="project" value="TreeGrafter"/>
</dbReference>
<dbReference type="GO" id="GO:0006879">
    <property type="term" value="P:intracellular iron ion homeostasis"/>
    <property type="evidence" value="ECO:0007669"/>
    <property type="project" value="UniProtKB-KW"/>
</dbReference>
<dbReference type="GO" id="GO:0006826">
    <property type="term" value="P:iron ion transport"/>
    <property type="evidence" value="ECO:0007669"/>
    <property type="project" value="InterPro"/>
</dbReference>
<dbReference type="CDD" id="cd00907">
    <property type="entry name" value="Bacterioferritin"/>
    <property type="match status" value="1"/>
</dbReference>
<dbReference type="FunFam" id="1.20.1260.10:FF:000005">
    <property type="entry name" value="Bacterioferritin"/>
    <property type="match status" value="1"/>
</dbReference>
<dbReference type="Gene3D" id="1.20.1260.10">
    <property type="match status" value="1"/>
</dbReference>
<dbReference type="InterPro" id="IPR002024">
    <property type="entry name" value="Bacterioferritin"/>
</dbReference>
<dbReference type="InterPro" id="IPR012347">
    <property type="entry name" value="Ferritin-like"/>
</dbReference>
<dbReference type="InterPro" id="IPR009040">
    <property type="entry name" value="Ferritin-like_diiron"/>
</dbReference>
<dbReference type="InterPro" id="IPR009078">
    <property type="entry name" value="Ferritin-like_SF"/>
</dbReference>
<dbReference type="InterPro" id="IPR008331">
    <property type="entry name" value="Ferritin_DPS_dom"/>
</dbReference>
<dbReference type="NCBIfam" id="TIGR00754">
    <property type="entry name" value="bfr"/>
    <property type="match status" value="1"/>
</dbReference>
<dbReference type="PANTHER" id="PTHR30295">
    <property type="entry name" value="BACTERIOFERRITIN"/>
    <property type="match status" value="1"/>
</dbReference>
<dbReference type="PANTHER" id="PTHR30295:SF0">
    <property type="entry name" value="BACTERIOFERRITIN"/>
    <property type="match status" value="1"/>
</dbReference>
<dbReference type="Pfam" id="PF00210">
    <property type="entry name" value="Ferritin"/>
    <property type="match status" value="1"/>
</dbReference>
<dbReference type="PIRSF" id="PIRSF002560">
    <property type="entry name" value="Bacterioferritin"/>
    <property type="match status" value="1"/>
</dbReference>
<dbReference type="PRINTS" id="PR00601">
    <property type="entry name" value="BACFERRITIN"/>
</dbReference>
<dbReference type="SUPFAM" id="SSF47240">
    <property type="entry name" value="Ferritin-like"/>
    <property type="match status" value="1"/>
</dbReference>
<dbReference type="PROSITE" id="PS00549">
    <property type="entry name" value="BACTERIOFERRITIN"/>
    <property type="match status" value="1"/>
</dbReference>
<dbReference type="PROSITE" id="PS50905">
    <property type="entry name" value="FERRITIN_LIKE"/>
    <property type="match status" value="1"/>
</dbReference>
<name>BFR_MYCBO</name>
<proteinExistence type="inferred from homology"/>
<evidence type="ECO:0000250" key="1"/>
<evidence type="ECO:0000250" key="2">
    <source>
        <dbReference type="UniProtKB" id="Q9HWF9"/>
    </source>
</evidence>
<evidence type="ECO:0000255" key="3">
    <source>
        <dbReference type="PROSITE-ProRule" id="PRU00085"/>
    </source>
</evidence>
<evidence type="ECO:0000305" key="4"/>
<reference key="1">
    <citation type="journal article" date="2003" name="Proc. Natl. Acad. Sci. U.S.A.">
        <title>The complete genome sequence of Mycobacterium bovis.</title>
        <authorList>
            <person name="Garnier T."/>
            <person name="Eiglmeier K."/>
            <person name="Camus J.-C."/>
            <person name="Medina N."/>
            <person name="Mansoor H."/>
            <person name="Pryor M."/>
            <person name="Duthoy S."/>
            <person name="Grondin S."/>
            <person name="Lacroix C."/>
            <person name="Monsempe C."/>
            <person name="Simon S."/>
            <person name="Harris B."/>
            <person name="Atkin R."/>
            <person name="Doggett J."/>
            <person name="Mayes R."/>
            <person name="Keating L."/>
            <person name="Wheeler P.R."/>
            <person name="Parkhill J."/>
            <person name="Barrell B.G."/>
            <person name="Cole S.T."/>
            <person name="Gordon S.V."/>
            <person name="Hewinson R.G."/>
        </authorList>
    </citation>
    <scope>NUCLEOTIDE SEQUENCE [LARGE SCALE GENOMIC DNA]</scope>
    <source>
        <strain>ATCC BAA-935 / AF2122/97</strain>
    </source>
</reference>
<reference key="2">
    <citation type="journal article" date="2017" name="Genome Announc.">
        <title>Updated reference genome sequence and annotation of Mycobacterium bovis AF2122/97.</title>
        <authorList>
            <person name="Malone K.M."/>
            <person name="Farrell D."/>
            <person name="Stuber T.P."/>
            <person name="Schubert O.T."/>
            <person name="Aebersold R."/>
            <person name="Robbe-Austerman S."/>
            <person name="Gordon S.V."/>
        </authorList>
    </citation>
    <scope>NUCLEOTIDE SEQUENCE [LARGE SCALE GENOMIC DNA]</scope>
    <scope>GENOME REANNOTATION</scope>
    <source>
        <strain>ATCC BAA-935 / AF2122/97</strain>
    </source>
</reference>
<sequence length="159" mass="18341">MQGDPDVLRLLNEQLTSELTAINQYFLHSKMQDNWGFTELAAHTRAESFDEMRHAEEITDRILLLDGLPNYQRIGSLRIGQTLREQFEADLAIEYDVLNRLKPGIVMCREKQDTTSAVLLEKIVADEEEHIDYLETQLELMDKLGEELYSAQCVSRPPT</sequence>